<sequence length="894" mass="102197">MIDAWAIKRALCIFILINCVLKLGRSRKITWKPKKGVYIPLDDANGCKGEWKRKGVFFNIQSGKKGKRLKGRKGLRRGLVTRGTPQFRRDKFIPLFLLQDCEHRSLNGKQYNLRGRRCSSPLDVNPRGWDILPPEQPNEETIGERIGERIGEAEQLEDEGLDGGPPPGMEAKKSSSSSSSNNVHSNCSDAGKAPVCSQENIRNFCILAHIDSGKSTLADRFLELTKTIKKKKMQDQFLDMMSLEREKGITIKLKAVRMNYKNYIFNLIDTPGHFDFYHEVKRSLSVCEGAILLIDGTKGIQSQTLNIFMELQKHNLKIIPVINKIDLNICRLEKIENDLLNKFHFMKKDILHISAKYSHGVESLFQRIVSEIPSPAIKSNSFFRAIVFDSFYDQYKGVILIIKVLNGVLTKKTEVFFIQSEKTYIIQEVGYLTPEMKPTESIRQGDIAYVSSNIRKCDEVQMSETIISRDIVHLNAQRRLVVDSDLLRRNPSGEEHINVKRCNIDSSLGGVAPRMERIEREVNLEEIAASKVDVSYPVVFCNIYSVNDKQANELQAALNKLKLNDASFSFKPDVCETLGKGFKCGFNGLLHLNIIQERIKREYDVETIVTAPSVNYLIRVKEKCIDKQLKERLIDASFDIANINVEGGDHDDCNDNGGSNSDDRSDRSGKNPPDGLYYMTSNVNDIPQKNYIHGIYEPYVRTSIMTPEEYQKYIMAECFQRRGIFIKKESMDSHIIFYFDMPLSEILINFLDQIKSCTKGYGSMSYENFITYRESDLHKINIYVNNRSIDSLSFLAHKLNYQEKGKRIVLKLKEMIKPHQFLVVIQAGIGTRIFASERINPLRKNVTAKCYGGDITRRRKLLEKQSAGKKKMFSIGKVKLPPNMFTKLFDLKAQ</sequence>
<protein>
    <recommendedName>
        <fullName evidence="1">Translation factor GUF1 homolog, mitochondrial</fullName>
        <ecNumber>3.6.5.-</ecNumber>
    </recommendedName>
    <alternativeName>
        <fullName evidence="1">Elongation factor 4 homolog</fullName>
        <shortName evidence="1">EF-4</shortName>
    </alternativeName>
    <alternativeName>
        <fullName evidence="1">GTPase GUF1 homolog</fullName>
    </alternativeName>
    <alternativeName>
        <fullName evidence="1">Ribosomal back-translocase</fullName>
    </alternativeName>
</protein>
<organism>
    <name type="scientific">Plasmodium knowlesi (strain H)</name>
    <dbReference type="NCBI Taxonomy" id="5851"/>
    <lineage>
        <taxon>Eukaryota</taxon>
        <taxon>Sar</taxon>
        <taxon>Alveolata</taxon>
        <taxon>Apicomplexa</taxon>
        <taxon>Aconoidasida</taxon>
        <taxon>Haemosporida</taxon>
        <taxon>Plasmodiidae</taxon>
        <taxon>Plasmodium</taxon>
        <taxon>Plasmodium (Plasmodium)</taxon>
    </lineage>
</organism>
<evidence type="ECO:0000255" key="1">
    <source>
        <dbReference type="HAMAP-Rule" id="MF_03137"/>
    </source>
</evidence>
<evidence type="ECO:0000256" key="2">
    <source>
        <dbReference type="SAM" id="MobiDB-lite"/>
    </source>
</evidence>
<evidence type="ECO:0000305" key="3"/>
<proteinExistence type="inferred from homology"/>
<feature type="chain" id="PRO_0000402853" description="Translation factor GUF1 homolog, mitochondrial">
    <location>
        <begin position="1"/>
        <end position="894"/>
    </location>
</feature>
<feature type="domain" description="tr-type G">
    <location>
        <begin position="199"/>
        <end position="376"/>
    </location>
</feature>
<feature type="region of interest" description="Disordered" evidence="2">
    <location>
        <begin position="157"/>
        <end position="189"/>
    </location>
</feature>
<feature type="region of interest" description="Disordered" evidence="2">
    <location>
        <begin position="649"/>
        <end position="674"/>
    </location>
</feature>
<feature type="compositionally biased region" description="Low complexity" evidence="2">
    <location>
        <begin position="174"/>
        <end position="188"/>
    </location>
</feature>
<feature type="binding site" evidence="1">
    <location>
        <begin position="208"/>
        <end position="215"/>
    </location>
    <ligand>
        <name>GTP</name>
        <dbReference type="ChEBI" id="CHEBI:37565"/>
    </ligand>
</feature>
<feature type="binding site" evidence="1">
    <location>
        <begin position="269"/>
        <end position="273"/>
    </location>
    <ligand>
        <name>GTP</name>
        <dbReference type="ChEBI" id="CHEBI:37565"/>
    </ligand>
</feature>
<feature type="binding site" evidence="1">
    <location>
        <begin position="323"/>
        <end position="326"/>
    </location>
    <ligand>
        <name>GTP</name>
        <dbReference type="ChEBI" id="CHEBI:37565"/>
    </ligand>
</feature>
<keyword id="KW-0342">GTP-binding</keyword>
<keyword id="KW-0378">Hydrolase</keyword>
<keyword id="KW-0472">Membrane</keyword>
<keyword id="KW-0496">Mitochondrion</keyword>
<keyword id="KW-0999">Mitochondrion inner membrane</keyword>
<keyword id="KW-0547">Nucleotide-binding</keyword>
<keyword id="KW-0648">Protein biosynthesis</keyword>
<keyword id="KW-1185">Reference proteome</keyword>
<gene>
    <name type="ORF">PKH_070910</name>
</gene>
<dbReference type="EC" id="3.6.5.-"/>
<dbReference type="EMBL" id="AM910989">
    <property type="protein sequence ID" value="CAQ39162.1"/>
    <property type="molecule type" value="Genomic_DNA"/>
</dbReference>
<dbReference type="RefSeq" id="XP_002258390.1">
    <property type="nucleotide sequence ID" value="XM_002258354.1"/>
</dbReference>
<dbReference type="SMR" id="B3L3C9"/>
<dbReference type="FunCoup" id="B3L3C9">
    <property type="interactions" value="266"/>
</dbReference>
<dbReference type="STRING" id="5851.B3L3C9"/>
<dbReference type="EnsemblProtists" id="CAQ39162">
    <property type="protein sequence ID" value="CAQ39162"/>
    <property type="gene ID" value="PKH_070910"/>
</dbReference>
<dbReference type="GeneID" id="7320118"/>
<dbReference type="KEGG" id="pkn:PKNH_0709700"/>
<dbReference type="VEuPathDB" id="PlasmoDB:PKNH_0709700"/>
<dbReference type="HOGENOM" id="CLU_009995_2_0_1"/>
<dbReference type="InParanoid" id="B3L3C9"/>
<dbReference type="OMA" id="QVKCDEN"/>
<dbReference type="OrthoDB" id="1074at2759"/>
<dbReference type="PhylomeDB" id="B3L3C9"/>
<dbReference type="Proteomes" id="UP000031513">
    <property type="component" value="Chromosome 7"/>
</dbReference>
<dbReference type="GO" id="GO:0005743">
    <property type="term" value="C:mitochondrial inner membrane"/>
    <property type="evidence" value="ECO:0007669"/>
    <property type="project" value="UniProtKB-SubCell"/>
</dbReference>
<dbReference type="GO" id="GO:0005759">
    <property type="term" value="C:mitochondrial matrix"/>
    <property type="evidence" value="ECO:0007669"/>
    <property type="project" value="UniProtKB-UniRule"/>
</dbReference>
<dbReference type="GO" id="GO:0005525">
    <property type="term" value="F:GTP binding"/>
    <property type="evidence" value="ECO:0007669"/>
    <property type="project" value="UniProtKB-UniRule"/>
</dbReference>
<dbReference type="GO" id="GO:0003924">
    <property type="term" value="F:GTPase activity"/>
    <property type="evidence" value="ECO:0007669"/>
    <property type="project" value="UniProtKB-UniRule"/>
</dbReference>
<dbReference type="GO" id="GO:0043022">
    <property type="term" value="F:ribosome binding"/>
    <property type="evidence" value="ECO:0007669"/>
    <property type="project" value="UniProtKB-UniRule"/>
</dbReference>
<dbReference type="GO" id="GO:0045727">
    <property type="term" value="P:positive regulation of translation"/>
    <property type="evidence" value="ECO:0007669"/>
    <property type="project" value="UniProtKB-UniRule"/>
</dbReference>
<dbReference type="GO" id="GO:0006412">
    <property type="term" value="P:translation"/>
    <property type="evidence" value="ECO:0007669"/>
    <property type="project" value="UniProtKB-KW"/>
</dbReference>
<dbReference type="CDD" id="cd03709">
    <property type="entry name" value="lepA_C"/>
    <property type="match status" value="1"/>
</dbReference>
<dbReference type="Gene3D" id="3.30.70.240">
    <property type="match status" value="1"/>
</dbReference>
<dbReference type="Gene3D" id="3.30.70.2570">
    <property type="entry name" value="Elongation factor 4, C-terminal domain"/>
    <property type="match status" value="1"/>
</dbReference>
<dbReference type="Gene3D" id="3.30.70.870">
    <property type="entry name" value="Elongation Factor G (Translational Gtpase), domain 3"/>
    <property type="match status" value="1"/>
</dbReference>
<dbReference type="Gene3D" id="3.40.50.300">
    <property type="entry name" value="P-loop containing nucleotide triphosphate hydrolases"/>
    <property type="match status" value="1"/>
</dbReference>
<dbReference type="Gene3D" id="2.40.30.10">
    <property type="entry name" value="Translation factors"/>
    <property type="match status" value="1"/>
</dbReference>
<dbReference type="HAMAP" id="MF_00071">
    <property type="entry name" value="LepA"/>
    <property type="match status" value="1"/>
</dbReference>
<dbReference type="InterPro" id="IPR006297">
    <property type="entry name" value="EF-4"/>
</dbReference>
<dbReference type="InterPro" id="IPR041095">
    <property type="entry name" value="EFG_II"/>
</dbReference>
<dbReference type="InterPro" id="IPR035647">
    <property type="entry name" value="EFG_III/V"/>
</dbReference>
<dbReference type="InterPro" id="IPR000640">
    <property type="entry name" value="EFG_V-like"/>
</dbReference>
<dbReference type="InterPro" id="IPR038363">
    <property type="entry name" value="LepA_C_sf"/>
</dbReference>
<dbReference type="InterPro" id="IPR013842">
    <property type="entry name" value="LepA_CTD"/>
</dbReference>
<dbReference type="InterPro" id="IPR035654">
    <property type="entry name" value="LepA_IV"/>
</dbReference>
<dbReference type="InterPro" id="IPR027417">
    <property type="entry name" value="P-loop_NTPase"/>
</dbReference>
<dbReference type="InterPro" id="IPR005225">
    <property type="entry name" value="Small_GTP-bd"/>
</dbReference>
<dbReference type="InterPro" id="IPR000795">
    <property type="entry name" value="T_Tr_GTP-bd_dom"/>
</dbReference>
<dbReference type="InterPro" id="IPR009000">
    <property type="entry name" value="Transl_B-barrel_sf"/>
</dbReference>
<dbReference type="NCBIfam" id="TIGR00231">
    <property type="entry name" value="small_GTP"/>
    <property type="match status" value="1"/>
</dbReference>
<dbReference type="PANTHER" id="PTHR43512:SF4">
    <property type="entry name" value="TRANSLATION FACTOR GUF1 HOMOLOG, CHLOROPLASTIC"/>
    <property type="match status" value="1"/>
</dbReference>
<dbReference type="PANTHER" id="PTHR43512">
    <property type="entry name" value="TRANSLATION FACTOR GUF1-RELATED"/>
    <property type="match status" value="1"/>
</dbReference>
<dbReference type="Pfam" id="PF00679">
    <property type="entry name" value="EFG_C"/>
    <property type="match status" value="1"/>
</dbReference>
<dbReference type="Pfam" id="PF14492">
    <property type="entry name" value="EFG_III"/>
    <property type="match status" value="1"/>
</dbReference>
<dbReference type="Pfam" id="PF00009">
    <property type="entry name" value="GTP_EFTU"/>
    <property type="match status" value="1"/>
</dbReference>
<dbReference type="Pfam" id="PF06421">
    <property type="entry name" value="LepA_C"/>
    <property type="match status" value="1"/>
</dbReference>
<dbReference type="PRINTS" id="PR00315">
    <property type="entry name" value="ELONGATNFCT"/>
</dbReference>
<dbReference type="SUPFAM" id="SSF54980">
    <property type="entry name" value="EF-G C-terminal domain-like"/>
    <property type="match status" value="2"/>
</dbReference>
<dbReference type="SUPFAM" id="SSF52540">
    <property type="entry name" value="P-loop containing nucleoside triphosphate hydrolases"/>
    <property type="match status" value="1"/>
</dbReference>
<dbReference type="SUPFAM" id="SSF50447">
    <property type="entry name" value="Translation proteins"/>
    <property type="match status" value="1"/>
</dbReference>
<dbReference type="PROSITE" id="PS51722">
    <property type="entry name" value="G_TR_2"/>
    <property type="match status" value="1"/>
</dbReference>
<reference key="1">
    <citation type="journal article" date="2008" name="Nature">
        <title>The genome of the simian and human malaria parasite Plasmodium knowlesi.</title>
        <authorList>
            <person name="Pain A."/>
            <person name="Boehme U."/>
            <person name="Berry A.E."/>
            <person name="Mungall K."/>
            <person name="Finn R.D."/>
            <person name="Jackson A.P."/>
            <person name="Mourier T."/>
            <person name="Mistry J."/>
            <person name="Pasini E.M."/>
            <person name="Aslett M.A."/>
            <person name="Balasubrammaniam S."/>
            <person name="Borgwardt K."/>
            <person name="Brooks K."/>
            <person name="Carret C."/>
            <person name="Carver T.J."/>
            <person name="Cherevach I."/>
            <person name="Chillingworth T."/>
            <person name="Clark T.G."/>
            <person name="Galinski M.R."/>
            <person name="Hall N."/>
            <person name="Harper D."/>
            <person name="Harris D."/>
            <person name="Hauser H."/>
            <person name="Ivens A."/>
            <person name="Janssen C.S."/>
            <person name="Keane T."/>
            <person name="Larke N."/>
            <person name="Lapp S."/>
            <person name="Marti M."/>
            <person name="Moule S."/>
            <person name="Meyer I.M."/>
            <person name="Ormond D."/>
            <person name="Peters N."/>
            <person name="Sanders M."/>
            <person name="Sanders S."/>
            <person name="Sargeant T.J."/>
            <person name="Simmonds M."/>
            <person name="Smith F."/>
            <person name="Squares R."/>
            <person name="Thurston S."/>
            <person name="Tivey A.R."/>
            <person name="Walker D."/>
            <person name="White B."/>
            <person name="Zuiderwijk E."/>
            <person name="Churcher C."/>
            <person name="Quail M.A."/>
            <person name="Cowman A.F."/>
            <person name="Turner C.M.R."/>
            <person name="Rajandream M.A."/>
            <person name="Kocken C.H.M."/>
            <person name="Thomas A.W."/>
            <person name="Newbold C.I."/>
            <person name="Barrell B.G."/>
            <person name="Berriman M."/>
        </authorList>
    </citation>
    <scope>NUCLEOTIDE SEQUENCE [LARGE SCALE GENOMIC DNA]</scope>
    <source>
        <strain>H</strain>
    </source>
</reference>
<name>GUF1_PLAKH</name>
<comment type="function">
    <text evidence="1">Promotes mitochondrial protein synthesis. May act as a fidelity factor of the translation reaction, by catalyzing a one-codon backward translocation of tRNAs on improperly translocated ribosomes. Binds to mitochondrial ribosomes in a GTP-dependent manner.</text>
</comment>
<comment type="catalytic activity">
    <reaction evidence="1">
        <text>GTP + H2O = GDP + phosphate + H(+)</text>
        <dbReference type="Rhea" id="RHEA:19669"/>
        <dbReference type="ChEBI" id="CHEBI:15377"/>
        <dbReference type="ChEBI" id="CHEBI:15378"/>
        <dbReference type="ChEBI" id="CHEBI:37565"/>
        <dbReference type="ChEBI" id="CHEBI:43474"/>
        <dbReference type="ChEBI" id="CHEBI:58189"/>
    </reaction>
</comment>
<comment type="subcellular location">
    <subcellularLocation>
        <location evidence="1">Mitochondrion inner membrane</location>
        <topology evidence="1">Peripheral membrane protein</topology>
        <orientation evidence="1">Matrix side</orientation>
    </subcellularLocation>
</comment>
<comment type="miscellaneous">
    <text evidence="1">This protein may be expected to contain an N-terminal transit peptide but none has been predicted.</text>
</comment>
<comment type="similarity">
    <text evidence="3">Belongs to the TRAFAC class translation factor GTPase superfamily. Classic translation factor GTPase family. LepA subfamily.</text>
</comment>
<accession>B3L3C9</accession>